<sequence>MTAVQLIVGLGNPGPEYDQTRHNAGALFVERLAHAQGISLVAERKYFGLVGKFSHQGKDVRLLIPTTYMNRSGQSVAALAGFFRIPPDAILVAHDELDMPPGVAKLKTGGGHGGHNGLRDIIAQLGNQNSFHRLRLGIGHPGHSSLVSGYVLGRAPRSEQELLDTSIDFALGVLPEMLAGDWTRAMQKLHSQKA</sequence>
<feature type="chain" id="PRO_1000010630" description="Peptidyl-tRNA hydrolase">
    <location>
        <begin position="1"/>
        <end position="194"/>
    </location>
</feature>
<feature type="active site" description="Proton acceptor" evidence="1">
    <location>
        <position position="22"/>
    </location>
</feature>
<feature type="binding site" evidence="1">
    <location>
        <position position="17"/>
    </location>
    <ligand>
        <name>tRNA</name>
        <dbReference type="ChEBI" id="CHEBI:17843"/>
    </ligand>
</feature>
<feature type="binding site" evidence="1">
    <location>
        <position position="68"/>
    </location>
    <ligand>
        <name>tRNA</name>
        <dbReference type="ChEBI" id="CHEBI:17843"/>
    </ligand>
</feature>
<feature type="binding site" evidence="1">
    <location>
        <position position="70"/>
    </location>
    <ligand>
        <name>tRNA</name>
        <dbReference type="ChEBI" id="CHEBI:17843"/>
    </ligand>
</feature>
<feature type="binding site" evidence="1">
    <location>
        <position position="116"/>
    </location>
    <ligand>
        <name>tRNA</name>
        <dbReference type="ChEBI" id="CHEBI:17843"/>
    </ligand>
</feature>
<feature type="site" description="Discriminates between blocked and unblocked aminoacyl-tRNA" evidence="1">
    <location>
        <position position="12"/>
    </location>
</feature>
<feature type="site" description="Stabilizes the basic form of H active site to accept a proton" evidence="1">
    <location>
        <position position="95"/>
    </location>
</feature>
<proteinExistence type="inferred from homology"/>
<accession>A6VC68</accession>
<gene>
    <name evidence="1" type="primary">pth</name>
    <name type="ordered locus">PSPA7_5322</name>
</gene>
<dbReference type="EC" id="3.1.1.29" evidence="1"/>
<dbReference type="EMBL" id="CP000744">
    <property type="protein sequence ID" value="ABR84932.1"/>
    <property type="molecule type" value="Genomic_DNA"/>
</dbReference>
<dbReference type="RefSeq" id="WP_003151683.1">
    <property type="nucleotide sequence ID" value="NC_009656.1"/>
</dbReference>
<dbReference type="SMR" id="A6VC68"/>
<dbReference type="GeneID" id="77223177"/>
<dbReference type="KEGG" id="pap:PSPA7_5322"/>
<dbReference type="HOGENOM" id="CLU_062456_3_1_6"/>
<dbReference type="Proteomes" id="UP000001582">
    <property type="component" value="Chromosome"/>
</dbReference>
<dbReference type="GO" id="GO:0005737">
    <property type="term" value="C:cytoplasm"/>
    <property type="evidence" value="ECO:0007669"/>
    <property type="project" value="UniProtKB-SubCell"/>
</dbReference>
<dbReference type="GO" id="GO:0004045">
    <property type="term" value="F:peptidyl-tRNA hydrolase activity"/>
    <property type="evidence" value="ECO:0007669"/>
    <property type="project" value="UniProtKB-UniRule"/>
</dbReference>
<dbReference type="GO" id="GO:0000049">
    <property type="term" value="F:tRNA binding"/>
    <property type="evidence" value="ECO:0007669"/>
    <property type="project" value="UniProtKB-UniRule"/>
</dbReference>
<dbReference type="GO" id="GO:0006515">
    <property type="term" value="P:protein quality control for misfolded or incompletely synthesized proteins"/>
    <property type="evidence" value="ECO:0007669"/>
    <property type="project" value="UniProtKB-UniRule"/>
</dbReference>
<dbReference type="GO" id="GO:0072344">
    <property type="term" value="P:rescue of stalled ribosome"/>
    <property type="evidence" value="ECO:0007669"/>
    <property type="project" value="UniProtKB-UniRule"/>
</dbReference>
<dbReference type="CDD" id="cd00462">
    <property type="entry name" value="PTH"/>
    <property type="match status" value="1"/>
</dbReference>
<dbReference type="FunFam" id="3.40.50.1470:FF:000001">
    <property type="entry name" value="Peptidyl-tRNA hydrolase"/>
    <property type="match status" value="1"/>
</dbReference>
<dbReference type="Gene3D" id="3.40.50.1470">
    <property type="entry name" value="Peptidyl-tRNA hydrolase"/>
    <property type="match status" value="1"/>
</dbReference>
<dbReference type="HAMAP" id="MF_00083">
    <property type="entry name" value="Pept_tRNA_hydro_bact"/>
    <property type="match status" value="1"/>
</dbReference>
<dbReference type="InterPro" id="IPR001328">
    <property type="entry name" value="Pept_tRNA_hydro"/>
</dbReference>
<dbReference type="InterPro" id="IPR018171">
    <property type="entry name" value="Pept_tRNA_hydro_CS"/>
</dbReference>
<dbReference type="InterPro" id="IPR036416">
    <property type="entry name" value="Pept_tRNA_hydro_sf"/>
</dbReference>
<dbReference type="NCBIfam" id="TIGR00447">
    <property type="entry name" value="pth"/>
    <property type="match status" value="1"/>
</dbReference>
<dbReference type="PANTHER" id="PTHR17224">
    <property type="entry name" value="PEPTIDYL-TRNA HYDROLASE"/>
    <property type="match status" value="1"/>
</dbReference>
<dbReference type="PANTHER" id="PTHR17224:SF1">
    <property type="entry name" value="PEPTIDYL-TRNA HYDROLASE"/>
    <property type="match status" value="1"/>
</dbReference>
<dbReference type="Pfam" id="PF01195">
    <property type="entry name" value="Pept_tRNA_hydro"/>
    <property type="match status" value="1"/>
</dbReference>
<dbReference type="SUPFAM" id="SSF53178">
    <property type="entry name" value="Peptidyl-tRNA hydrolase-like"/>
    <property type="match status" value="1"/>
</dbReference>
<dbReference type="PROSITE" id="PS01195">
    <property type="entry name" value="PEPT_TRNA_HYDROL_1"/>
    <property type="match status" value="1"/>
</dbReference>
<dbReference type="PROSITE" id="PS01196">
    <property type="entry name" value="PEPT_TRNA_HYDROL_2"/>
    <property type="match status" value="1"/>
</dbReference>
<name>PTH_PSEP7</name>
<keyword id="KW-0963">Cytoplasm</keyword>
<keyword id="KW-0378">Hydrolase</keyword>
<keyword id="KW-0694">RNA-binding</keyword>
<keyword id="KW-0820">tRNA-binding</keyword>
<reference key="1">
    <citation type="submission" date="2007-06" db="EMBL/GenBank/DDBJ databases">
        <authorList>
            <person name="Dodson R.J."/>
            <person name="Harkins D."/>
            <person name="Paulsen I.T."/>
        </authorList>
    </citation>
    <scope>NUCLEOTIDE SEQUENCE [LARGE SCALE GENOMIC DNA]</scope>
    <source>
        <strain>DSM 24068 / PA7</strain>
    </source>
</reference>
<evidence type="ECO:0000255" key="1">
    <source>
        <dbReference type="HAMAP-Rule" id="MF_00083"/>
    </source>
</evidence>
<organism>
    <name type="scientific">Pseudomonas paraeruginosa (strain DSM 24068 / PA7)</name>
    <name type="common">Pseudomonas aeruginosa (strain PA7)</name>
    <dbReference type="NCBI Taxonomy" id="381754"/>
    <lineage>
        <taxon>Bacteria</taxon>
        <taxon>Pseudomonadati</taxon>
        <taxon>Pseudomonadota</taxon>
        <taxon>Gammaproteobacteria</taxon>
        <taxon>Pseudomonadales</taxon>
        <taxon>Pseudomonadaceae</taxon>
        <taxon>Pseudomonas</taxon>
        <taxon>Pseudomonas paraeruginosa</taxon>
    </lineage>
</organism>
<comment type="function">
    <text evidence="1">Hydrolyzes ribosome-free peptidyl-tRNAs (with 1 or more amino acids incorporated), which drop off the ribosome during protein synthesis, or as a result of ribosome stalling.</text>
</comment>
<comment type="function">
    <text evidence="1">Catalyzes the release of premature peptidyl moieties from peptidyl-tRNA molecules trapped in stalled 50S ribosomal subunits, and thus maintains levels of free tRNAs and 50S ribosomes.</text>
</comment>
<comment type="catalytic activity">
    <reaction evidence="1">
        <text>an N-acyl-L-alpha-aminoacyl-tRNA + H2O = an N-acyl-L-amino acid + a tRNA + H(+)</text>
        <dbReference type="Rhea" id="RHEA:54448"/>
        <dbReference type="Rhea" id="RHEA-COMP:10123"/>
        <dbReference type="Rhea" id="RHEA-COMP:13883"/>
        <dbReference type="ChEBI" id="CHEBI:15377"/>
        <dbReference type="ChEBI" id="CHEBI:15378"/>
        <dbReference type="ChEBI" id="CHEBI:59874"/>
        <dbReference type="ChEBI" id="CHEBI:78442"/>
        <dbReference type="ChEBI" id="CHEBI:138191"/>
        <dbReference type="EC" id="3.1.1.29"/>
    </reaction>
</comment>
<comment type="subunit">
    <text evidence="1">Monomer.</text>
</comment>
<comment type="subcellular location">
    <subcellularLocation>
        <location evidence="1">Cytoplasm</location>
    </subcellularLocation>
</comment>
<comment type="similarity">
    <text evidence="1">Belongs to the PTH family.</text>
</comment>
<protein>
    <recommendedName>
        <fullName evidence="1">Peptidyl-tRNA hydrolase</fullName>
        <shortName evidence="1">Pth</shortName>
        <ecNumber evidence="1">3.1.1.29</ecNumber>
    </recommendedName>
</protein>